<accession>Q32LJ7</accession>
<accession>G1K180</accession>
<protein>
    <recommendedName>
        <fullName evidence="1">RIB43A-like with coiled-coils protein 2</fullName>
    </recommendedName>
</protein>
<dbReference type="EMBL" id="BC109543">
    <property type="protein sequence ID" value="AAI09544.1"/>
    <property type="status" value="ALT_INIT"/>
    <property type="molecule type" value="mRNA"/>
</dbReference>
<dbReference type="RefSeq" id="NP_001033280.2">
    <property type="nucleotide sequence ID" value="NM_001038191.2"/>
</dbReference>
<dbReference type="RefSeq" id="XP_015326930.1">
    <property type="nucleotide sequence ID" value="XM_015471444.1"/>
</dbReference>
<dbReference type="PDB" id="7RRO">
    <property type="method" value="EM"/>
    <property type="resolution" value="3.40 A"/>
    <property type="chains" value="O/P/Q/R/S=1-377"/>
</dbReference>
<dbReference type="PDB" id="8OTZ">
    <property type="method" value="EM"/>
    <property type="resolution" value="3.60 A"/>
    <property type="chains" value="BU/BV/Bi/Bj/Bk=1-377"/>
</dbReference>
<dbReference type="PDB" id="9CPB">
    <property type="method" value="EM"/>
    <property type="resolution" value="3.52 A"/>
    <property type="chains" value="5A/5B=1-377"/>
</dbReference>
<dbReference type="PDBsum" id="7RRO"/>
<dbReference type="PDBsum" id="8OTZ"/>
<dbReference type="PDBsum" id="9CPB"/>
<dbReference type="EMDB" id="EMD-17187"/>
<dbReference type="EMDB" id="EMD-24664"/>
<dbReference type="EMDB" id="EMD-45801"/>
<dbReference type="EMDB" id="EMD-50664"/>
<dbReference type="SMR" id="Q32LJ7"/>
<dbReference type="FunCoup" id="Q32LJ7">
    <property type="interactions" value="55"/>
</dbReference>
<dbReference type="STRING" id="9913.ENSBTAP00000004671"/>
<dbReference type="PaxDb" id="9913-ENSBTAP00000004671"/>
<dbReference type="GeneID" id="540723"/>
<dbReference type="KEGG" id="bta:540723"/>
<dbReference type="CTD" id="26150"/>
<dbReference type="VEuPathDB" id="HostDB:ENSBTAG00000003594"/>
<dbReference type="eggNOG" id="ENOG502QWST">
    <property type="taxonomic scope" value="Eukaryota"/>
</dbReference>
<dbReference type="HOGENOM" id="CLU_061822_0_1_1"/>
<dbReference type="InParanoid" id="Q32LJ7"/>
<dbReference type="OMA" id="NLCRAIN"/>
<dbReference type="OrthoDB" id="429119at2759"/>
<dbReference type="TreeFam" id="TF324120"/>
<dbReference type="Proteomes" id="UP000009136">
    <property type="component" value="Chromosome 5"/>
</dbReference>
<dbReference type="Bgee" id="ENSBTAG00000003594">
    <property type="expression patterns" value="Expressed in spermatid and 35 other cell types or tissues"/>
</dbReference>
<dbReference type="GO" id="GO:0160111">
    <property type="term" value="C:axonemal A tubule inner sheath"/>
    <property type="evidence" value="ECO:0000250"/>
    <property type="project" value="UniProtKB"/>
</dbReference>
<dbReference type="GO" id="GO:0005879">
    <property type="term" value="C:axonemal microtubule"/>
    <property type="evidence" value="ECO:0000314"/>
    <property type="project" value="UniProtKB"/>
</dbReference>
<dbReference type="GO" id="GO:0036126">
    <property type="term" value="C:sperm flagellum"/>
    <property type="evidence" value="ECO:0000250"/>
    <property type="project" value="UniProtKB"/>
</dbReference>
<dbReference type="GO" id="GO:0030317">
    <property type="term" value="P:flagellated sperm motility"/>
    <property type="evidence" value="ECO:0000250"/>
    <property type="project" value="UniProtKB"/>
</dbReference>
<dbReference type="InterPro" id="IPR008805">
    <property type="entry name" value="RIB43A"/>
</dbReference>
<dbReference type="PANTHER" id="PTHR14517:SF10">
    <property type="entry name" value="RIB43A-LIKE WITH COILED-COILS PROTEIN 2"/>
    <property type="match status" value="1"/>
</dbReference>
<dbReference type="PANTHER" id="PTHR14517">
    <property type="entry name" value="RIB43A-RELATED"/>
    <property type="match status" value="1"/>
</dbReference>
<dbReference type="Pfam" id="PF05914">
    <property type="entry name" value="RIB43A"/>
    <property type="match status" value="1"/>
</dbReference>
<sequence length="377" mass="44695">MEVAQPKDLKEDFVLAKRRHAELVRQKRIFNARNRIIGGDTTAWDAQVCDQNIKAATEKARDEAFAAEMRQNDKIACLSENRERRDRKNLCKAINDFQQSFQRPETRREFDLSDPLALKKDRPARQSDYDARNTISGMQKFMGEDLNFHLRKKFQEEQNREWSLQQQKEQMIGRENQKCAEDLYLKTRLQFDETAKHLQNLETATRKAVCATVKEFNKNQALESAEKKIQERKQEQEDNLAEISNMLRGDLLSENPQQAASSFGPHRVVPDRWKGMSQEQLEEIRLVQRQQVQEKLRLQEEERQRDMDWDRRRIQKARATLLFEQQQQRLQRGLRRALDCSNLSLAREQLLQKKHMKELCTNHATEDYFTQFNTGSR</sequence>
<feature type="chain" id="PRO_0000254097" description="RIB43A-like with coiled-coils protein 2">
    <location>
        <begin position="1"/>
        <end position="377"/>
    </location>
</feature>
<feature type="coiled-coil region" evidence="2">
    <location>
        <begin position="217"/>
        <end position="250"/>
    </location>
</feature>
<feature type="coiled-coil region" evidence="2">
    <location>
        <begin position="282"/>
        <end position="308"/>
    </location>
</feature>
<reference key="1">
    <citation type="journal article" date="2009" name="Genome Biol.">
        <title>A whole-genome assembly of the domestic cow, Bos taurus.</title>
        <authorList>
            <person name="Zimin A.V."/>
            <person name="Delcher A.L."/>
            <person name="Florea L."/>
            <person name="Kelley D.R."/>
            <person name="Schatz M.C."/>
            <person name="Puiu D."/>
            <person name="Hanrahan F."/>
            <person name="Pertea G."/>
            <person name="Van Tassell C.P."/>
            <person name="Sonstegard T.S."/>
            <person name="Marcais G."/>
            <person name="Roberts M."/>
            <person name="Subramanian P."/>
            <person name="Yorke J.A."/>
            <person name="Salzberg S.L."/>
        </authorList>
    </citation>
    <scope>NUCLEOTIDE SEQUENCE [LARGE SCALE GENOMIC DNA]</scope>
    <source>
        <strain>Hereford</strain>
    </source>
</reference>
<reference key="2">
    <citation type="submission" date="2005-11" db="EMBL/GenBank/DDBJ databases">
        <authorList>
            <consortium name="NIH - Mammalian Gene Collection (MGC) project"/>
        </authorList>
    </citation>
    <scope>NUCLEOTIDE SEQUENCE [LARGE SCALE MRNA]</scope>
    <source>
        <strain>Crossbred X Angus</strain>
        <tissue>Liver</tissue>
    </source>
</reference>
<reference evidence="6" key="3">
    <citation type="journal article" date="2021" name="Cell">
        <title>De novo identification of mammalian ciliary motility proteins using cryo-EM.</title>
        <authorList>
            <person name="Gui M."/>
            <person name="Farley H."/>
            <person name="Anujan P."/>
            <person name="Anderson J.R."/>
            <person name="Maxwell D.W."/>
            <person name="Whitchurch J.B."/>
            <person name="Botsch J.J."/>
            <person name="Qiu T."/>
            <person name="Meleppattu S."/>
            <person name="Singh S.K."/>
            <person name="Zhang Q."/>
            <person name="Thompson J."/>
            <person name="Lucas J.S."/>
            <person name="Bingle C.D."/>
            <person name="Norris D.P."/>
            <person name="Roy S."/>
            <person name="Brown A."/>
        </authorList>
    </citation>
    <scope>STRUCTURE BY ELECTRON MICROSCOPY (3.40 ANGSTROMS)</scope>
    <scope>FUNCTION</scope>
    <scope>SUBCELLULAR LOCATION</scope>
    <scope>TISSUE SPECIFICITY</scope>
</reference>
<reference evidence="7" key="4">
    <citation type="journal article" date="2023" name="Cell">
        <title>Structural specializations of the sperm tail.</title>
        <authorList>
            <person name="Leung M.R."/>
            <person name="Zeng J."/>
            <person name="Wang X."/>
            <person name="Roelofs M.C."/>
            <person name="Huang W."/>
            <person name="Zenezini Chiozzi R."/>
            <person name="Hevler J.F."/>
            <person name="Heck A.J.R."/>
            <person name="Dutcher S.K."/>
            <person name="Brown A."/>
            <person name="Zhang R."/>
            <person name="Zeev-Ben-Mordehai T."/>
        </authorList>
    </citation>
    <scope>STRUCTURE BY ELECTRON MICROSCOPY (3.60 ANGSTROMS)</scope>
    <scope>FUNCTION</scope>
    <scope>SUBUNIT</scope>
    <scope>SUBCELLULAR LOCATION</scope>
</reference>
<evidence type="ECO:0000250" key="1">
    <source>
        <dbReference type="UniProtKB" id="Q9H4K1"/>
    </source>
</evidence>
<evidence type="ECO:0000255" key="2"/>
<evidence type="ECO:0000269" key="3">
    <source>
    </source>
</evidence>
<evidence type="ECO:0000269" key="4">
    <source>
    </source>
</evidence>
<evidence type="ECO:0000305" key="5"/>
<evidence type="ECO:0007744" key="6">
    <source>
        <dbReference type="PDB" id="7RRO"/>
    </source>
</evidence>
<evidence type="ECO:0007744" key="7">
    <source>
        <dbReference type="PDB" id="8OTZ"/>
    </source>
</evidence>
<proteinExistence type="evidence at protein level"/>
<name>RIBC2_BOVIN</name>
<gene>
    <name evidence="1" type="primary">RIBC2</name>
</gene>
<keyword id="KW-0002">3D-structure</keyword>
<keyword id="KW-0966">Cell projection</keyword>
<keyword id="KW-0969">Cilium</keyword>
<keyword id="KW-0175">Coiled coil</keyword>
<keyword id="KW-0963">Cytoplasm</keyword>
<keyword id="KW-0206">Cytoskeleton</keyword>
<keyword id="KW-0282">Flagellum</keyword>
<keyword id="KW-1185">Reference proteome</keyword>
<organism>
    <name type="scientific">Bos taurus</name>
    <name type="common">Bovine</name>
    <dbReference type="NCBI Taxonomy" id="9913"/>
    <lineage>
        <taxon>Eukaryota</taxon>
        <taxon>Metazoa</taxon>
        <taxon>Chordata</taxon>
        <taxon>Craniata</taxon>
        <taxon>Vertebrata</taxon>
        <taxon>Euteleostomi</taxon>
        <taxon>Mammalia</taxon>
        <taxon>Eutheria</taxon>
        <taxon>Laurasiatheria</taxon>
        <taxon>Artiodactyla</taxon>
        <taxon>Ruminantia</taxon>
        <taxon>Pecora</taxon>
        <taxon>Bovidae</taxon>
        <taxon>Bovinae</taxon>
        <taxon>Bos</taxon>
    </lineage>
</organism>
<comment type="function">
    <text evidence="3 4">Microtubule inner protein (MIP) part of the dynein-decorated doublet microtubules (DMTs) in cilia axoneme, which is required for motile cilia beating.</text>
</comment>
<comment type="subunit">
    <text evidence="4">Microtubule inner protein component of sperm flagellar doublet microtubules.</text>
</comment>
<comment type="subcellular location">
    <subcellularLocation>
        <location evidence="3">Cytoplasm</location>
        <location evidence="3">Cytoskeleton</location>
        <location evidence="3">Cilium axoneme</location>
    </subcellularLocation>
    <subcellularLocation>
        <location evidence="4">Cytoplasm</location>
        <location evidence="4">Cytoskeleton</location>
        <location evidence="4">Flagellum axoneme</location>
    </subcellularLocation>
</comment>
<comment type="tissue specificity">
    <text evidence="3">Expressed in trachea multiciliated cells.</text>
</comment>
<comment type="similarity">
    <text evidence="5">Belongs to the RIB43A family.</text>
</comment>
<comment type="sequence caution" evidence="5">
    <conflict type="erroneous initiation">
        <sequence resource="EMBL-CDS" id="AAI09544"/>
    </conflict>
    <text>Truncated N-terminus.</text>
</comment>